<feature type="chain" id="PRO_0000119225" description="V-type proton ATPase subunit a, Golgi isoform">
    <location>
        <begin position="1"/>
        <end position="890"/>
    </location>
</feature>
<feature type="topological domain" description="Cytoplasmic" evidence="1">
    <location>
        <begin position="1"/>
        <end position="450"/>
    </location>
</feature>
<feature type="transmembrane region" description="Helical" evidence="1">
    <location>
        <begin position="451"/>
        <end position="469"/>
    </location>
</feature>
<feature type="topological domain" description="Vacuolar" evidence="1">
    <location>
        <begin position="470"/>
        <end position="471"/>
    </location>
</feature>
<feature type="transmembrane region" description="Helical" evidence="1">
    <location>
        <begin position="472"/>
        <end position="488"/>
    </location>
</feature>
<feature type="topological domain" description="Cytoplasmic" evidence="1">
    <location>
        <begin position="489"/>
        <end position="502"/>
    </location>
</feature>
<feature type="transmembrane region" description="Helical" evidence="1">
    <location>
        <begin position="503"/>
        <end position="532"/>
    </location>
</feature>
<feature type="topological domain" description="Vacuolar" evidence="1">
    <location>
        <begin position="533"/>
        <end position="580"/>
    </location>
</feature>
<feature type="transmembrane region" description="Helical" evidence="1">
    <location>
        <begin position="581"/>
        <end position="600"/>
    </location>
</feature>
<feature type="topological domain" description="Cytoplasmic" evidence="1">
    <location>
        <begin position="601"/>
        <end position="618"/>
    </location>
</feature>
<feature type="transmembrane region" description="Helical" evidence="1">
    <location>
        <begin position="619"/>
        <end position="639"/>
    </location>
</feature>
<feature type="topological domain" description="Vacuolar" evidence="1">
    <location>
        <begin position="640"/>
        <end position="682"/>
    </location>
</feature>
<feature type="transmembrane region" description="Helical" evidence="1">
    <location>
        <begin position="683"/>
        <end position="702"/>
    </location>
</feature>
<feature type="topological domain" description="Cytoplasmic" evidence="1">
    <location>
        <begin position="703"/>
        <end position="779"/>
    </location>
</feature>
<feature type="transmembrane region" description="Helical" evidence="1">
    <location>
        <begin position="780"/>
        <end position="804"/>
    </location>
</feature>
<feature type="topological domain" description="Vacuolar" evidence="1">
    <location>
        <begin position="805"/>
        <end position="828"/>
    </location>
</feature>
<feature type="transmembrane region" description="Helical" evidence="1">
    <location>
        <begin position="829"/>
        <end position="867"/>
    </location>
</feature>
<feature type="topological domain" description="Cytoplasmic" evidence="1">
    <location>
        <begin position="868"/>
        <end position="890"/>
    </location>
</feature>
<feature type="coiled-coil region" evidence="1">
    <location>
        <begin position="113"/>
        <end position="154"/>
    </location>
</feature>
<feature type="coiled-coil region" evidence="1">
    <location>
        <begin position="297"/>
        <end position="347"/>
    </location>
</feature>
<feature type="modified residue" description="N-acetylmethionine" evidence="10">
    <location>
        <position position="1"/>
    </location>
</feature>
<feature type="modified residue" description="Phosphoserine" evidence="7 8 9">
    <location>
        <position position="223"/>
    </location>
</feature>
<feature type="modified residue" description="Phosphoserine" evidence="9">
    <location>
        <position position="228"/>
    </location>
</feature>
<feature type="sequence conflict" description="In Ref. 1; AAA20596." evidence="6" ref="1">
    <original>Q</original>
    <variation>E</variation>
    <location>
        <position position="805"/>
    </location>
</feature>
<feature type="strand" evidence="11">
    <location>
        <begin position="7"/>
        <end position="9"/>
    </location>
</feature>
<feature type="strand" evidence="11">
    <location>
        <begin position="16"/>
        <end position="24"/>
    </location>
</feature>
<feature type="helix" evidence="11">
    <location>
        <begin position="25"/>
        <end position="35"/>
    </location>
</feature>
<feature type="strand" evidence="11">
    <location>
        <begin position="49"/>
        <end position="55"/>
    </location>
</feature>
<feature type="helix" evidence="11">
    <location>
        <begin position="58"/>
        <end position="77"/>
    </location>
</feature>
<feature type="helix" evidence="11">
    <location>
        <begin position="113"/>
        <end position="117"/>
    </location>
</feature>
<feature type="helix" evidence="11">
    <location>
        <begin position="119"/>
        <end position="163"/>
    </location>
</feature>
<feature type="strand" evidence="11">
    <location>
        <begin position="241"/>
        <end position="245"/>
    </location>
</feature>
<feature type="helix" evidence="11">
    <location>
        <begin position="246"/>
        <end position="248"/>
    </location>
</feature>
<feature type="helix" evidence="11">
    <location>
        <begin position="249"/>
        <end position="259"/>
    </location>
</feature>
<feature type="strand" evidence="11">
    <location>
        <begin position="267"/>
        <end position="270"/>
    </location>
</feature>
<feature type="strand" evidence="11">
    <location>
        <begin position="284"/>
        <end position="288"/>
    </location>
</feature>
<feature type="strand" evidence="11">
    <location>
        <begin position="293"/>
        <end position="296"/>
    </location>
</feature>
<feature type="helix" evidence="11">
    <location>
        <begin position="297"/>
        <end position="304"/>
    </location>
</feature>
<feature type="turn" evidence="11">
    <location>
        <begin position="305"/>
        <end position="308"/>
    </location>
</feature>
<feature type="turn" evidence="11">
    <location>
        <begin position="318"/>
        <end position="320"/>
    </location>
</feature>
<feature type="helix" evidence="11">
    <location>
        <begin position="321"/>
        <end position="351"/>
    </location>
</feature>
<feature type="helix" evidence="11">
    <location>
        <begin position="354"/>
        <end position="371"/>
    </location>
</feature>
<feature type="strand" evidence="11">
    <location>
        <begin position="378"/>
        <end position="386"/>
    </location>
</feature>
<feature type="helix" evidence="11">
    <location>
        <begin position="389"/>
        <end position="391"/>
    </location>
</feature>
<feature type="helix" evidence="11">
    <location>
        <begin position="392"/>
        <end position="405"/>
    </location>
</feature>
<feature type="turn" evidence="11">
    <location>
        <begin position="431"/>
        <end position="433"/>
    </location>
</feature>
<feature type="helix" evidence="11">
    <location>
        <begin position="434"/>
        <end position="443"/>
    </location>
</feature>
<feature type="turn" evidence="11">
    <location>
        <begin position="453"/>
        <end position="456"/>
    </location>
</feature>
<feature type="helix" evidence="11">
    <location>
        <begin position="457"/>
        <end position="468"/>
    </location>
</feature>
<feature type="helix" evidence="11">
    <location>
        <begin position="472"/>
        <end position="487"/>
    </location>
</feature>
<feature type="helix" evidence="11">
    <location>
        <begin position="489"/>
        <end position="493"/>
    </location>
</feature>
<feature type="helix" evidence="11">
    <location>
        <begin position="499"/>
        <end position="506"/>
    </location>
</feature>
<feature type="helix" evidence="11">
    <location>
        <begin position="508"/>
        <end position="524"/>
    </location>
</feature>
<feature type="strand" evidence="11">
    <location>
        <begin position="528"/>
        <end position="530"/>
    </location>
</feature>
<feature type="strand" evidence="11">
    <location>
        <begin position="539"/>
        <end position="541"/>
    </location>
</feature>
<feature type="strand" evidence="11">
    <location>
        <begin position="561"/>
        <end position="564"/>
    </location>
</feature>
<feature type="helix" evidence="11">
    <location>
        <begin position="566"/>
        <end position="568"/>
    </location>
</feature>
<feature type="helix" evidence="11">
    <location>
        <begin position="574"/>
        <end position="597"/>
    </location>
</feature>
<feature type="helix" evidence="11">
    <location>
        <begin position="599"/>
        <end position="607"/>
    </location>
</feature>
<feature type="helix" evidence="11">
    <location>
        <begin position="611"/>
        <end position="625"/>
    </location>
</feature>
<feature type="turn" evidence="11">
    <location>
        <begin position="626"/>
        <end position="628"/>
    </location>
</feature>
<feature type="helix" evidence="11">
    <location>
        <begin position="629"/>
        <end position="641"/>
    </location>
</feature>
<feature type="strand" evidence="11">
    <location>
        <begin position="644"/>
        <end position="647"/>
    </location>
</feature>
<feature type="helix" evidence="11">
    <location>
        <begin position="655"/>
        <end position="663"/>
    </location>
</feature>
<feature type="helix" evidence="11">
    <location>
        <begin position="676"/>
        <end position="688"/>
    </location>
</feature>
<feature type="helix" evidence="11">
    <location>
        <begin position="690"/>
        <end position="702"/>
    </location>
</feature>
<feature type="helix" evidence="11">
    <location>
        <begin position="704"/>
        <end position="706"/>
    </location>
</feature>
<feature type="helix" evidence="11">
    <location>
        <begin position="768"/>
        <end position="790"/>
    </location>
</feature>
<feature type="turn" evidence="11">
    <location>
        <begin position="791"/>
        <end position="794"/>
    </location>
</feature>
<feature type="helix" evidence="11">
    <location>
        <begin position="795"/>
        <end position="814"/>
    </location>
</feature>
<feature type="strand" evidence="11">
    <location>
        <begin position="816"/>
        <end position="818"/>
    </location>
</feature>
<feature type="strand" evidence="11">
    <location>
        <begin position="821"/>
        <end position="823"/>
    </location>
</feature>
<feature type="helix" evidence="11">
    <location>
        <begin position="827"/>
        <end position="846"/>
    </location>
</feature>
<feature type="helix" evidence="11">
    <location>
        <begin position="847"/>
        <end position="851"/>
    </location>
</feature>
<feature type="helix" evidence="11">
    <location>
        <begin position="853"/>
        <end position="865"/>
    </location>
</feature>
<feature type="turn" evidence="11">
    <location>
        <begin position="866"/>
        <end position="871"/>
    </location>
</feature>
<feature type="helix" evidence="11">
    <location>
        <begin position="885"/>
        <end position="887"/>
    </location>
</feature>
<accession>P37296</accession>
<accession>D6VZM9</accession>
<gene>
    <name type="primary">STV1</name>
    <name type="ordered locus">YMR054W</name>
    <name type="ORF">YM9796.07</name>
</gene>
<evidence type="ECO:0000255" key="1"/>
<evidence type="ECO:0000269" key="2">
    <source>
    </source>
</evidence>
<evidence type="ECO:0000269" key="3">
    <source>
    </source>
</evidence>
<evidence type="ECO:0000269" key="4">
    <source>
    </source>
</evidence>
<evidence type="ECO:0000269" key="5">
    <source>
    </source>
</evidence>
<evidence type="ECO:0000305" key="6"/>
<evidence type="ECO:0007744" key="7">
    <source>
    </source>
</evidence>
<evidence type="ECO:0007744" key="8">
    <source>
    </source>
</evidence>
<evidence type="ECO:0007744" key="9">
    <source>
    </source>
</evidence>
<evidence type="ECO:0007744" key="10">
    <source>
    </source>
</evidence>
<evidence type="ECO:0007829" key="11">
    <source>
        <dbReference type="PDB" id="6O7U"/>
    </source>
</evidence>
<protein>
    <recommendedName>
        <fullName>V-type proton ATPase subunit a, Golgi isoform</fullName>
        <shortName>V-ATPase a 2 subunit</shortName>
    </recommendedName>
    <alternativeName>
        <fullName>Similar to VPH1 protein 1</fullName>
    </alternativeName>
    <alternativeName>
        <fullName>V-ATPase 101 kDa subunit</fullName>
    </alternativeName>
    <alternativeName>
        <fullName>V-ATPase subunit AC115</fullName>
    </alternativeName>
    <alternativeName>
        <fullName>Vacuolar proton translocating ATPase subunit a 2</fullName>
    </alternativeName>
</protein>
<dbReference type="EMBL" id="U06465">
    <property type="protein sequence ID" value="AAA20596.1"/>
    <property type="molecule type" value="Genomic_DNA"/>
</dbReference>
<dbReference type="EMBL" id="Z49703">
    <property type="protein sequence ID" value="CAA89764.1"/>
    <property type="molecule type" value="Genomic_DNA"/>
</dbReference>
<dbReference type="EMBL" id="BK006946">
    <property type="protein sequence ID" value="DAA09953.1"/>
    <property type="molecule type" value="Genomic_DNA"/>
</dbReference>
<dbReference type="PIR" id="S54554">
    <property type="entry name" value="S54554"/>
</dbReference>
<dbReference type="RefSeq" id="NP_013770.1">
    <property type="nucleotide sequence ID" value="NM_001182552.1"/>
</dbReference>
<dbReference type="PDB" id="6O7U">
    <property type="method" value="EM"/>
    <property type="resolution" value="3.10 A"/>
    <property type="chains" value="a=1-890"/>
</dbReference>
<dbReference type="PDB" id="6O7V">
    <property type="method" value="EM"/>
    <property type="resolution" value="6.60 A"/>
    <property type="chains" value="a=1-890"/>
</dbReference>
<dbReference type="PDB" id="6O7W">
    <property type="method" value="EM"/>
    <property type="resolution" value="7.00 A"/>
    <property type="chains" value="a=1-890"/>
</dbReference>
<dbReference type="PDB" id="6O7X">
    <property type="method" value="EM"/>
    <property type="resolution" value="8.70 A"/>
    <property type="chains" value="a=1-890"/>
</dbReference>
<dbReference type="PDBsum" id="6O7U"/>
<dbReference type="PDBsum" id="6O7V"/>
<dbReference type="PDBsum" id="6O7W"/>
<dbReference type="PDBsum" id="6O7X"/>
<dbReference type="BMRB" id="P37296"/>
<dbReference type="EMDB" id="EMD-0645"/>
<dbReference type="EMDB" id="EMD-0646"/>
<dbReference type="EMDB" id="EMD-0647"/>
<dbReference type="EMDB" id="EMD-0648"/>
<dbReference type="SMR" id="P37296"/>
<dbReference type="BioGRID" id="35230">
    <property type="interactions" value="153"/>
</dbReference>
<dbReference type="ComplexPortal" id="CPX-1192">
    <property type="entry name" value="Vacuolar proton translocating ATPase complex, Golgi variant"/>
</dbReference>
<dbReference type="DIP" id="DIP-4450N"/>
<dbReference type="FunCoup" id="P37296">
    <property type="interactions" value="426"/>
</dbReference>
<dbReference type="IntAct" id="P37296">
    <property type="interactions" value="23"/>
</dbReference>
<dbReference type="MINT" id="P37296"/>
<dbReference type="STRING" id="4932.YMR054W"/>
<dbReference type="TCDB" id="3.A.2.2.3">
    <property type="family name" value="the h+- or na+-translocating f-type, v-type and a-type atpase (f-atpase) superfamily"/>
</dbReference>
<dbReference type="iPTMnet" id="P37296"/>
<dbReference type="PaxDb" id="4932-YMR054W"/>
<dbReference type="PeptideAtlas" id="P37296"/>
<dbReference type="EnsemblFungi" id="YMR054W_mRNA">
    <property type="protein sequence ID" value="YMR054W"/>
    <property type="gene ID" value="YMR054W"/>
</dbReference>
<dbReference type="GeneID" id="855076"/>
<dbReference type="KEGG" id="sce:YMR054W"/>
<dbReference type="AGR" id="SGD:S000004658"/>
<dbReference type="SGD" id="S000004658">
    <property type="gene designation" value="STV1"/>
</dbReference>
<dbReference type="VEuPathDB" id="FungiDB:YMR054W"/>
<dbReference type="eggNOG" id="KOG2189">
    <property type="taxonomic scope" value="Eukaryota"/>
</dbReference>
<dbReference type="GeneTree" id="ENSGT00950000182881"/>
<dbReference type="HOGENOM" id="CLU_005230_0_0_1"/>
<dbReference type="InParanoid" id="P37296"/>
<dbReference type="OMA" id="TYVQLYI"/>
<dbReference type="OrthoDB" id="10264220at2759"/>
<dbReference type="BioCyc" id="YEAST:G3O-32759-MONOMER"/>
<dbReference type="Reactome" id="R-SCE-1222556">
    <property type="pathway name" value="ROS and RNS production in phagocytes"/>
</dbReference>
<dbReference type="Reactome" id="R-SCE-6798695">
    <property type="pathway name" value="Neutrophil degranulation"/>
</dbReference>
<dbReference type="Reactome" id="R-SCE-77387">
    <property type="pathway name" value="Insulin receptor recycling"/>
</dbReference>
<dbReference type="Reactome" id="R-SCE-917977">
    <property type="pathway name" value="Transferrin endocytosis and recycling"/>
</dbReference>
<dbReference type="Reactome" id="R-SCE-9639288">
    <property type="pathway name" value="Amino acids regulate mTORC1"/>
</dbReference>
<dbReference type="BioGRID-ORCS" id="855076">
    <property type="hits" value="2 hits in 10 CRISPR screens"/>
</dbReference>
<dbReference type="PRO" id="PR:P37296"/>
<dbReference type="Proteomes" id="UP000002311">
    <property type="component" value="Chromosome XIII"/>
</dbReference>
<dbReference type="RNAct" id="P37296">
    <property type="molecule type" value="protein"/>
</dbReference>
<dbReference type="GO" id="GO:0010008">
    <property type="term" value="C:endosome membrane"/>
    <property type="evidence" value="ECO:0007669"/>
    <property type="project" value="UniProtKB-SubCell"/>
</dbReference>
<dbReference type="GO" id="GO:0000329">
    <property type="term" value="C:fungal-type vacuole membrane"/>
    <property type="evidence" value="ECO:0000318"/>
    <property type="project" value="GO_Central"/>
</dbReference>
<dbReference type="GO" id="GO:0005794">
    <property type="term" value="C:Golgi apparatus"/>
    <property type="evidence" value="ECO:0000314"/>
    <property type="project" value="SGD"/>
</dbReference>
<dbReference type="GO" id="GO:0000139">
    <property type="term" value="C:Golgi membrane"/>
    <property type="evidence" value="ECO:0000303"/>
    <property type="project" value="ComplexPortal"/>
</dbReference>
<dbReference type="GO" id="GO:0005770">
    <property type="term" value="C:late endosome"/>
    <property type="evidence" value="ECO:0000314"/>
    <property type="project" value="SGD"/>
</dbReference>
<dbReference type="GO" id="GO:0033176">
    <property type="term" value="C:proton-transporting V-type ATPase complex"/>
    <property type="evidence" value="ECO:0000353"/>
    <property type="project" value="ComplexPortal"/>
</dbReference>
<dbReference type="GO" id="GO:0016471">
    <property type="term" value="C:vacuolar proton-transporting V-type ATPase complex"/>
    <property type="evidence" value="ECO:0000318"/>
    <property type="project" value="GO_Central"/>
</dbReference>
<dbReference type="GO" id="GO:0000220">
    <property type="term" value="C:vacuolar proton-transporting V-type ATPase, V0 domain"/>
    <property type="evidence" value="ECO:0000314"/>
    <property type="project" value="SGD"/>
</dbReference>
<dbReference type="GO" id="GO:0051117">
    <property type="term" value="F:ATPase binding"/>
    <property type="evidence" value="ECO:0000318"/>
    <property type="project" value="GO_Central"/>
</dbReference>
<dbReference type="GO" id="GO:0070273">
    <property type="term" value="F:phosphatidylinositol-4-phosphate binding"/>
    <property type="evidence" value="ECO:0000314"/>
    <property type="project" value="SGD"/>
</dbReference>
<dbReference type="GO" id="GO:0046961">
    <property type="term" value="F:proton-transporting ATPase activity, rotational mechanism"/>
    <property type="evidence" value="ECO:0007669"/>
    <property type="project" value="InterPro"/>
</dbReference>
<dbReference type="GO" id="GO:0048388">
    <property type="term" value="P:endosomal lumen acidification"/>
    <property type="evidence" value="ECO:0000303"/>
    <property type="project" value="ComplexPortal"/>
</dbReference>
<dbReference type="GO" id="GO:0061795">
    <property type="term" value="P:Golgi lumen acidification"/>
    <property type="evidence" value="ECO:0000303"/>
    <property type="project" value="ComplexPortal"/>
</dbReference>
<dbReference type="GO" id="GO:1902600">
    <property type="term" value="P:proton transmembrane transport"/>
    <property type="evidence" value="ECO:0000314"/>
    <property type="project" value="ComplexPortal"/>
</dbReference>
<dbReference type="GO" id="GO:0007035">
    <property type="term" value="P:vacuolar acidification"/>
    <property type="evidence" value="ECO:0000315"/>
    <property type="project" value="SGD"/>
</dbReference>
<dbReference type="InterPro" id="IPR002490">
    <property type="entry name" value="V-ATPase_116kDa_su"/>
</dbReference>
<dbReference type="InterPro" id="IPR026028">
    <property type="entry name" value="V-type_ATPase_116kDa_su_euka"/>
</dbReference>
<dbReference type="PANTHER" id="PTHR11629:SF59">
    <property type="entry name" value="V-TYPE PROTON ATPASE SUBUNIT A, GOLGI ISOFORM"/>
    <property type="match status" value="1"/>
</dbReference>
<dbReference type="PANTHER" id="PTHR11629">
    <property type="entry name" value="VACUOLAR PROTON ATPASES"/>
    <property type="match status" value="1"/>
</dbReference>
<dbReference type="Pfam" id="PF01496">
    <property type="entry name" value="V_ATPase_I"/>
    <property type="match status" value="1"/>
</dbReference>
<dbReference type="PIRSF" id="PIRSF001293">
    <property type="entry name" value="ATP6V0A1"/>
    <property type="match status" value="1"/>
</dbReference>
<proteinExistence type="evidence at protein level"/>
<sequence>MNQEEAIFRSADMTYVQLYIPLEVIREVTFLLGKMSVFMVMDLNKDLTAFQRGYVNQLRRFDEVERMVGFLNEVVEKHAAETWKYILHIDDEGNDIAQPDMADLINTMEPLSLENVNDMVKEITDCESRARQLDESLDSLRSKLNDLLEQRQVIFECSKFIEVNPGIAGRATNPEIEQEERDVDEFRMTPDDISETLSDAFSFDDETPQDRGALGNDLTRNQSVEDLSFLEQGYQHRYMITGSIRRTKVDILNRILWRLLRGNLIFQNFPIEEPLLEGKEKVEKDCFIIFTHGETLLKKVKRVIDSLNGKIVSLNTRSSELVDTLNRQIDDLQRILDTTEQTLHTELLVIHDQLPVWSAMTKREKYVYTTLNKFQQESQGLIAEGWVPSTELIHLQDSLKDYIETLGSEYSTVFNVILTNKLPPTYHRTNKFTQAFQSIVDAYGIATYKEINAGLATVVTFPFMFAIMFGDMGHGFILFLMALFLVLNERKFGAMHRDEIFDMAFTGRYVLLLMGAFSVYTGLLYNDIFSKSMTIFKSGWQWPSTFRKGESIEAKKTGVYPFGLDFAWHGTDNGLLFSNSYKMKLSILMGYAHMTYSFMFSYINYRAKNSKVDIIGNFIPGLVFMQSIFGYLSWAIVYKWSKDWIKDDKPAPGLLNMLINMFLAPGTIDDQLYSGQAKLQVVLLLAALVCVPWLLLYKPLTLRRLNKNGGGGRPHGYQSVGNIEHEEQIAQQRHSAEGFQGMIISDVASVADSINESVGGGEQGPFNFGDVMIHQVIHTIEFCLNCISHTASYLRLWALSLAHAQLSSVLWDMTISNAFSSKNSGSPLAVMKVVFLFAMWFVLTVCILVFMEGTSAMLHALRLHWVEAMSKFFEGEGYAYEPFSFRAIIE</sequence>
<reference key="1">
    <citation type="journal article" date="1994" name="J. Biol. Chem.">
        <title>STV1 gene encodes functional homologue of 95-kDa yeast vacuolar H(+)-ATPase subunit Vph1p.</title>
        <authorList>
            <person name="Manolson M.F."/>
            <person name="Wu B."/>
            <person name="Proteau D."/>
            <person name="Taillon B.E."/>
            <person name="Roberts B.T."/>
            <person name="Hoyt M.A."/>
            <person name="Jones E.W."/>
        </authorList>
    </citation>
    <scope>NUCLEOTIDE SEQUENCE [GENOMIC DNA]</scope>
    <scope>FUNCTION</scope>
    <scope>SUBUNIT</scope>
    <scope>SUBCELLULAR LOCATION</scope>
    <source>
        <strain>ATCC 26109 / X2180</strain>
    </source>
</reference>
<reference key="2">
    <citation type="journal article" date="1997" name="Nature">
        <title>The nucleotide sequence of Saccharomyces cerevisiae chromosome XIII.</title>
        <authorList>
            <person name="Bowman S."/>
            <person name="Churcher C.M."/>
            <person name="Badcock K."/>
            <person name="Brown D."/>
            <person name="Chillingworth T."/>
            <person name="Connor R."/>
            <person name="Dedman K."/>
            <person name="Devlin K."/>
            <person name="Gentles S."/>
            <person name="Hamlin N."/>
            <person name="Hunt S."/>
            <person name="Jagels K."/>
            <person name="Lye G."/>
            <person name="Moule S."/>
            <person name="Odell C."/>
            <person name="Pearson D."/>
            <person name="Rajandream M.A."/>
            <person name="Rice P."/>
            <person name="Skelton J."/>
            <person name="Walsh S.V."/>
            <person name="Whitehead S."/>
            <person name="Barrell B.G."/>
        </authorList>
    </citation>
    <scope>NUCLEOTIDE SEQUENCE [LARGE SCALE GENOMIC DNA]</scope>
    <source>
        <strain>ATCC 204508 / S288c</strain>
    </source>
</reference>
<reference key="3">
    <citation type="journal article" date="2014" name="G3 (Bethesda)">
        <title>The reference genome sequence of Saccharomyces cerevisiae: Then and now.</title>
        <authorList>
            <person name="Engel S.R."/>
            <person name="Dietrich F.S."/>
            <person name="Fisk D.G."/>
            <person name="Binkley G."/>
            <person name="Balakrishnan R."/>
            <person name="Costanzo M.C."/>
            <person name="Dwight S.S."/>
            <person name="Hitz B.C."/>
            <person name="Karra K."/>
            <person name="Nash R.S."/>
            <person name="Weng S."/>
            <person name="Wong E.D."/>
            <person name="Lloyd P."/>
            <person name="Skrzypek M.S."/>
            <person name="Miyasato S.R."/>
            <person name="Simison M."/>
            <person name="Cherry J.M."/>
        </authorList>
    </citation>
    <scope>GENOME REANNOTATION</scope>
    <source>
        <strain>ATCC 204508 / S288c</strain>
    </source>
</reference>
<reference key="4">
    <citation type="journal article" date="2001" name="J. Biol. Chem.">
        <title>Yeast V-ATPase complexes containing different isoforms of the 100-kDa a-subunit differ in coupling efficiency and in vivo dissociation.</title>
        <authorList>
            <person name="Kawasaki-Nishi S."/>
            <person name="Nishi T."/>
            <person name="Forgac M."/>
        </authorList>
    </citation>
    <scope>FUNCTION</scope>
    <scope>SUBUNIT</scope>
</reference>
<reference key="5">
    <citation type="journal article" date="2003" name="Nature">
        <title>Global analysis of protein localization in budding yeast.</title>
        <authorList>
            <person name="Huh W.-K."/>
            <person name="Falvo J.V."/>
            <person name="Gerke L.C."/>
            <person name="Carroll A.S."/>
            <person name="Howson R.W."/>
            <person name="Weissman J.S."/>
            <person name="O'Shea E.K."/>
        </authorList>
    </citation>
    <scope>SUBCELLULAR LOCATION [LARGE SCALE ANALYSIS]</scope>
</reference>
<reference key="6">
    <citation type="journal article" date="2003" name="Nature">
        <title>Global analysis of protein expression in yeast.</title>
        <authorList>
            <person name="Ghaemmaghami S."/>
            <person name="Huh W.-K."/>
            <person name="Bower K."/>
            <person name="Howson R.W."/>
            <person name="Belle A."/>
            <person name="Dephoure N."/>
            <person name="O'Shea E.K."/>
            <person name="Weissman J.S."/>
        </authorList>
    </citation>
    <scope>LEVEL OF PROTEIN EXPRESSION [LARGE SCALE ANALYSIS]</scope>
</reference>
<reference key="7">
    <citation type="journal article" date="2006" name="Proc. Natl. Acad. Sci. U.S.A.">
        <title>A global topology map of the Saccharomyces cerevisiae membrane proteome.</title>
        <authorList>
            <person name="Kim H."/>
            <person name="Melen K."/>
            <person name="Oesterberg M."/>
            <person name="von Heijne G."/>
        </authorList>
    </citation>
    <scope>TOPOLOGY [LARGE SCALE ANALYSIS]</scope>
    <source>
        <strain>ATCC 208353 / W303-1A</strain>
    </source>
</reference>
<reference key="8">
    <citation type="journal article" date="2007" name="J. Proteome Res.">
        <title>Large-scale phosphorylation analysis of alpha-factor-arrested Saccharomyces cerevisiae.</title>
        <authorList>
            <person name="Li X."/>
            <person name="Gerber S.A."/>
            <person name="Rudner A.D."/>
            <person name="Beausoleil S.A."/>
            <person name="Haas W."/>
            <person name="Villen J."/>
            <person name="Elias J.E."/>
            <person name="Gygi S.P."/>
        </authorList>
    </citation>
    <scope>PHOSPHORYLATION [LARGE SCALE ANALYSIS] AT SER-223</scope>
    <scope>IDENTIFICATION BY MASS SPECTROMETRY [LARGE SCALE ANALYSIS]</scope>
    <source>
        <strain>ADR376</strain>
    </source>
</reference>
<reference key="9">
    <citation type="journal article" date="2008" name="Mol. Cell. Proteomics">
        <title>A multidimensional chromatography technology for in-depth phosphoproteome analysis.</title>
        <authorList>
            <person name="Albuquerque C.P."/>
            <person name="Smolka M.B."/>
            <person name="Payne S.H."/>
            <person name="Bafna V."/>
            <person name="Eng J."/>
            <person name="Zhou H."/>
        </authorList>
    </citation>
    <scope>PHOSPHORYLATION [LARGE SCALE ANALYSIS] AT SER-223</scope>
    <scope>IDENTIFICATION BY MASS SPECTROMETRY [LARGE SCALE ANALYSIS]</scope>
</reference>
<reference key="10">
    <citation type="journal article" date="2009" name="Science">
        <title>Global analysis of Cdk1 substrate phosphorylation sites provides insights into evolution.</title>
        <authorList>
            <person name="Holt L.J."/>
            <person name="Tuch B.B."/>
            <person name="Villen J."/>
            <person name="Johnson A.D."/>
            <person name="Gygi S.P."/>
            <person name="Morgan D.O."/>
        </authorList>
    </citation>
    <scope>PHOSPHORYLATION [LARGE SCALE ANALYSIS] AT SER-223 AND SER-228</scope>
    <scope>IDENTIFICATION BY MASS SPECTROMETRY [LARGE SCALE ANALYSIS]</scope>
</reference>
<reference key="11">
    <citation type="journal article" date="2012" name="Proc. Natl. Acad. Sci. U.S.A.">
        <title>N-terminal acetylome analyses and functional insights of the N-terminal acetyltransferase NatB.</title>
        <authorList>
            <person name="Van Damme P."/>
            <person name="Lasa M."/>
            <person name="Polevoda B."/>
            <person name="Gazquez C."/>
            <person name="Elosegui-Artola A."/>
            <person name="Kim D.S."/>
            <person name="De Juan-Pardo E."/>
            <person name="Demeyer K."/>
            <person name="Hole K."/>
            <person name="Larrea E."/>
            <person name="Timmerman E."/>
            <person name="Prieto J."/>
            <person name="Arnesen T."/>
            <person name="Sherman F."/>
            <person name="Gevaert K."/>
            <person name="Aldabe R."/>
        </authorList>
    </citation>
    <scope>ACETYLATION [LARGE SCALE ANALYSIS] AT MET-1</scope>
    <scope>IDENTIFICATION BY MASS SPECTROMETRY [LARGE SCALE ANALYSIS]</scope>
</reference>
<keyword id="KW-0002">3D-structure</keyword>
<keyword id="KW-0007">Acetylation</keyword>
<keyword id="KW-0175">Coiled coil</keyword>
<keyword id="KW-0967">Endosome</keyword>
<keyword id="KW-0325">Glycoprotein</keyword>
<keyword id="KW-0333">Golgi apparatus</keyword>
<keyword id="KW-0375">Hydrogen ion transport</keyword>
<keyword id="KW-0406">Ion transport</keyword>
<keyword id="KW-0472">Membrane</keyword>
<keyword id="KW-0597">Phosphoprotein</keyword>
<keyword id="KW-1185">Reference proteome</keyword>
<keyword id="KW-0812">Transmembrane</keyword>
<keyword id="KW-1133">Transmembrane helix</keyword>
<keyword id="KW-0813">Transport</keyword>
<comment type="function">
    <text evidence="2 5">Subunit of the V0 complex of vacuolar(H+)-ATPase (V-ATPase), a multisubunit enzyme composed of a peripheral complex (V1) that hydrolyzes ATP and a membrane integral complex (V0) that translocates protons (PubMed:11278748, PubMed:7514599). V-ATPase is responsible for acidifying and maintaining the pH of intracellular compartments (PubMed:11278748, PubMed:7514599). Is present only in Golgi- and endosome-residing V-ATPase complexes; enzymes containing this subunit have a 4-fold lower ratio of proton transport to ATP hydrolysis than complexes containing the vacuolar isoform and do not dissociate V1 and V0 in response to glucose depletion (PubMed:11278748, PubMed:7514599).</text>
</comment>
<comment type="subunit">
    <text evidence="2 5">V-ATPase is a heteromultimeric enzyme composed of a peripheral catalytic V1 complex (components A to H) attached to an integral membrane V0 proton pore complex (components: a, c, c', c'', d, e, f and VOA1).</text>
</comment>
<comment type="interaction">
    <interactant intactId="EBI-18479">
        <id>P37296</id>
    </interactant>
    <interactant intactId="EBI-20201">
        <id>P32366</id>
        <label>VMA6</label>
    </interactant>
    <organismsDiffer>false</organismsDiffer>
    <experiments>3</experiments>
</comment>
<comment type="subcellular location">
    <subcellularLocation>
        <location evidence="5">Endosome membrane</location>
        <topology evidence="1">Multi-pass membrane protein</topology>
    </subcellularLocation>
    <subcellularLocation>
        <location evidence="3 5">Golgi apparatus membrane</location>
        <topology evidence="1">Multi-pass membrane protein</topology>
    </subcellularLocation>
</comment>
<comment type="PTM">
    <text>Glycosylated.</text>
</comment>
<comment type="miscellaneous">
    <text evidence="4">Present with 1084 molecules/cell in log phase SD medium.</text>
</comment>
<comment type="similarity">
    <text evidence="6">Belongs to the V-ATPase 116 kDa subunit family.</text>
</comment>
<organism>
    <name type="scientific">Saccharomyces cerevisiae (strain ATCC 204508 / S288c)</name>
    <name type="common">Baker's yeast</name>
    <dbReference type="NCBI Taxonomy" id="559292"/>
    <lineage>
        <taxon>Eukaryota</taxon>
        <taxon>Fungi</taxon>
        <taxon>Dikarya</taxon>
        <taxon>Ascomycota</taxon>
        <taxon>Saccharomycotina</taxon>
        <taxon>Saccharomycetes</taxon>
        <taxon>Saccharomycetales</taxon>
        <taxon>Saccharomycetaceae</taxon>
        <taxon>Saccharomyces</taxon>
    </lineage>
</organism>
<name>VPP2_YEAST</name>